<organism>
    <name type="scientific">Salmonella agona (strain SL483)</name>
    <dbReference type="NCBI Taxonomy" id="454166"/>
    <lineage>
        <taxon>Bacteria</taxon>
        <taxon>Pseudomonadati</taxon>
        <taxon>Pseudomonadota</taxon>
        <taxon>Gammaproteobacteria</taxon>
        <taxon>Enterobacterales</taxon>
        <taxon>Enterobacteriaceae</taxon>
        <taxon>Salmonella</taxon>
    </lineage>
</organism>
<evidence type="ECO:0000255" key="1">
    <source>
        <dbReference type="HAMAP-Rule" id="MF_00291"/>
    </source>
</evidence>
<evidence type="ECO:0000305" key="2"/>
<reference key="1">
    <citation type="journal article" date="2011" name="J. Bacteriol.">
        <title>Comparative genomics of 28 Salmonella enterica isolates: evidence for CRISPR-mediated adaptive sublineage evolution.</title>
        <authorList>
            <person name="Fricke W.F."/>
            <person name="Mammel M.K."/>
            <person name="McDermott P.F."/>
            <person name="Tartera C."/>
            <person name="White D.G."/>
            <person name="Leclerc J.E."/>
            <person name="Ravel J."/>
            <person name="Cebula T.A."/>
        </authorList>
    </citation>
    <scope>NUCLEOTIDE SEQUENCE [LARGE SCALE GENOMIC DNA]</scope>
    <source>
        <strain>SL483</strain>
    </source>
</reference>
<sequence length="241" mass="26759">MATVSMRDMLKAGVHFGHQTRYWNPKMKPFIFGARNKVHIINLEKTVPMFNEALAELNKISARKGKILFVGTKRAASEAVKEAANSCDQFFVNHRWLGGMLTNWKTVRQSIKRLKDLETQSQDGTFEKLTKKEALMRTRELEKLENSLGGIKDMGGLPDALFVIDADHEHIAIKEANNLGIPVFAIVDTNSDPDGVDFVIPGNDDAIRAVSLYLGAVAATVREGRSQDLASQAEESFVEAE</sequence>
<feature type="chain" id="PRO_1000115050" description="Small ribosomal subunit protein uS2">
    <location>
        <begin position="1"/>
        <end position="241"/>
    </location>
</feature>
<protein>
    <recommendedName>
        <fullName evidence="1">Small ribosomal subunit protein uS2</fullName>
    </recommendedName>
    <alternativeName>
        <fullName evidence="2">30S ribosomal protein S2</fullName>
    </alternativeName>
</protein>
<dbReference type="EMBL" id="CP001138">
    <property type="protein sequence ID" value="ACH50887.1"/>
    <property type="molecule type" value="Genomic_DNA"/>
</dbReference>
<dbReference type="RefSeq" id="WP_000246886.1">
    <property type="nucleotide sequence ID" value="NC_011149.1"/>
</dbReference>
<dbReference type="SMR" id="B5F8T0"/>
<dbReference type="KEGG" id="sea:SeAg_B0256"/>
<dbReference type="HOGENOM" id="CLU_040318_1_0_6"/>
<dbReference type="Proteomes" id="UP000008819">
    <property type="component" value="Chromosome"/>
</dbReference>
<dbReference type="GO" id="GO:0022627">
    <property type="term" value="C:cytosolic small ribosomal subunit"/>
    <property type="evidence" value="ECO:0007669"/>
    <property type="project" value="TreeGrafter"/>
</dbReference>
<dbReference type="GO" id="GO:0003735">
    <property type="term" value="F:structural constituent of ribosome"/>
    <property type="evidence" value="ECO:0007669"/>
    <property type="project" value="InterPro"/>
</dbReference>
<dbReference type="GO" id="GO:0006412">
    <property type="term" value="P:translation"/>
    <property type="evidence" value="ECO:0007669"/>
    <property type="project" value="UniProtKB-UniRule"/>
</dbReference>
<dbReference type="CDD" id="cd01425">
    <property type="entry name" value="RPS2"/>
    <property type="match status" value="1"/>
</dbReference>
<dbReference type="FunFam" id="1.10.287.610:FF:000001">
    <property type="entry name" value="30S ribosomal protein S2"/>
    <property type="match status" value="1"/>
</dbReference>
<dbReference type="Gene3D" id="3.40.50.10490">
    <property type="entry name" value="Glucose-6-phosphate isomerase like protein, domain 1"/>
    <property type="match status" value="1"/>
</dbReference>
<dbReference type="Gene3D" id="1.10.287.610">
    <property type="entry name" value="Helix hairpin bin"/>
    <property type="match status" value="1"/>
</dbReference>
<dbReference type="HAMAP" id="MF_00291_B">
    <property type="entry name" value="Ribosomal_uS2_B"/>
    <property type="match status" value="1"/>
</dbReference>
<dbReference type="InterPro" id="IPR001865">
    <property type="entry name" value="Ribosomal_uS2"/>
</dbReference>
<dbReference type="InterPro" id="IPR005706">
    <property type="entry name" value="Ribosomal_uS2_bac/mit/plastid"/>
</dbReference>
<dbReference type="InterPro" id="IPR018130">
    <property type="entry name" value="Ribosomal_uS2_CS"/>
</dbReference>
<dbReference type="InterPro" id="IPR023591">
    <property type="entry name" value="Ribosomal_uS2_flav_dom_sf"/>
</dbReference>
<dbReference type="NCBIfam" id="TIGR01011">
    <property type="entry name" value="rpsB_bact"/>
    <property type="match status" value="1"/>
</dbReference>
<dbReference type="PANTHER" id="PTHR12534">
    <property type="entry name" value="30S RIBOSOMAL PROTEIN S2 PROKARYOTIC AND ORGANELLAR"/>
    <property type="match status" value="1"/>
</dbReference>
<dbReference type="PANTHER" id="PTHR12534:SF0">
    <property type="entry name" value="SMALL RIBOSOMAL SUBUNIT PROTEIN US2M"/>
    <property type="match status" value="1"/>
</dbReference>
<dbReference type="Pfam" id="PF00318">
    <property type="entry name" value="Ribosomal_S2"/>
    <property type="match status" value="1"/>
</dbReference>
<dbReference type="PRINTS" id="PR00395">
    <property type="entry name" value="RIBOSOMALS2"/>
</dbReference>
<dbReference type="SUPFAM" id="SSF52313">
    <property type="entry name" value="Ribosomal protein S2"/>
    <property type="match status" value="1"/>
</dbReference>
<dbReference type="PROSITE" id="PS00962">
    <property type="entry name" value="RIBOSOMAL_S2_1"/>
    <property type="match status" value="1"/>
</dbReference>
<dbReference type="PROSITE" id="PS00963">
    <property type="entry name" value="RIBOSOMAL_S2_2"/>
    <property type="match status" value="1"/>
</dbReference>
<accession>B5F8T0</accession>
<gene>
    <name evidence="1" type="primary">rpsB</name>
    <name type="ordered locus">SeAg_B0256</name>
</gene>
<keyword id="KW-0687">Ribonucleoprotein</keyword>
<keyword id="KW-0689">Ribosomal protein</keyword>
<proteinExistence type="inferred from homology"/>
<name>RS2_SALA4</name>
<comment type="similarity">
    <text evidence="1">Belongs to the universal ribosomal protein uS2 family.</text>
</comment>